<comment type="function">
    <text evidence="1 2">Component of the MRN complex, which plays a central role in double-strand break (DSB) repair, DNA recombination, maintenance of telomere integrity and meiosis. The MRN complex is involved in the repair of DNA double-strand breaks (DSBs) via homologous recombination (HR), an error-free mechanism which primarily occurs during S and G2 phases (By similarity). The complex (1) mediates the end resection of damaged DNA, which generates proper single-stranded DNA, a key initial steps in HR, and is (2) required for the recruitment of other repair factors and efficient activation of ATM and ATR upon DNA damage. The MRN complex possesses single-strand endonuclease activity and double-strand-specific 3'-5' exonuclease activity, which are provided by MRE11, to initiate end resection, which is required for single-strand invasion and recombination. Within the MRN complex, nbn acts as a protein-protein adapter, which specifically recognizes and binds phosphorylated proteins, promoting their recruitment to DNA damage sites. Recruits mre11 and rad50 components of the MRN complex to DSBs in response to DNA damage (By similarity). Promotes the recruitment of PI3/PI4-kinase family members atm, atr, and probably DNA-PKcs to the DNA damage sites, activating their functions (By similarity). Mediates the recruitment of phosphorylated rbbp8/CtIP to DSBs, leading to cooperation between the MRN complex and rbbp8/CtIP to initiate end resection (By similarity). The MRN complex and rbbp8/CtIP are also required for chromosome alignment during metaphase (By similarity).</text>
</comment>
<comment type="subunit">
    <text evidence="2">Component of the MRN complex composed of two heterodimers rad50 and mre11 associated with a single nbn.</text>
</comment>
<comment type="subcellular location">
    <subcellularLocation>
        <location evidence="1">Nucleus</location>
    </subcellularLocation>
    <subcellularLocation>
        <location evidence="1">Chromosome</location>
    </subcellularLocation>
    <subcellularLocation>
        <location evidence="1">Nucleus</location>
        <location evidence="1">PML body</location>
    </subcellularLocation>
    <subcellularLocation>
        <location evidence="1">Chromosome</location>
        <location evidence="1">Telomere</location>
    </subcellularLocation>
    <text evidence="1">Localizes to DNA double-strand breaks (DSBs); recruited to DNA damage sites via association with phosphorylated proteins, such as phosphorylated H2AX.</text>
</comment>
<comment type="domain">
    <text evidence="1">The FHA and BRCT domains specifically recognize and bind phosphorylated proteins.</text>
</comment>
<comment type="domain">
    <text evidence="1">The C-terminal domain contains a MRE11-binding site, and this interaction is required for the nuclear localization of the MRN complex.</text>
</comment>
<comment type="domain">
    <text evidence="1">The FxF/Y motif (also named EEXXXDDL motif) is required for the interaction with ATM and its recruitment to sites of DNA damage and promote the phosphorylation of ATM substrates, leading to the events of DNA damage response.</text>
</comment>
<comment type="similarity">
    <text evidence="6">Belongs to the Nibrin family.</text>
</comment>
<accession>Q5I2W8</accession>
<accession>B3DHD3</accession>
<gene>
    <name type="primary">nbn</name>
    <name type="synonym">nbs1</name>
    <name type="ORF">zgc:194152</name>
</gene>
<protein>
    <recommendedName>
        <fullName>Nibrin</fullName>
    </recommendedName>
    <alternativeName>
        <fullName>Nijmegen breakage syndrome protein 1 homolog</fullName>
    </alternativeName>
</protein>
<proteinExistence type="evidence at transcript level"/>
<evidence type="ECO:0000250" key="1">
    <source>
        <dbReference type="UniProtKB" id="O60934"/>
    </source>
</evidence>
<evidence type="ECO:0000250" key="2">
    <source>
        <dbReference type="UniProtKB" id="Q6XV80"/>
    </source>
</evidence>
<evidence type="ECO:0000255" key="3"/>
<evidence type="ECO:0000255" key="4">
    <source>
        <dbReference type="PROSITE-ProRule" id="PRU00086"/>
    </source>
</evidence>
<evidence type="ECO:0000256" key="5">
    <source>
        <dbReference type="SAM" id="MobiDB-lite"/>
    </source>
</evidence>
<evidence type="ECO:0000305" key="6"/>
<keyword id="KW-0131">Cell cycle</keyword>
<keyword id="KW-0158">Chromosome</keyword>
<keyword id="KW-0227">DNA damage</keyword>
<keyword id="KW-0234">DNA repair</keyword>
<keyword id="KW-0469">Meiosis</keyword>
<keyword id="KW-0539">Nucleus</keyword>
<keyword id="KW-1185">Reference proteome</keyword>
<keyword id="KW-0779">Telomere</keyword>
<reference key="1">
    <citation type="submission" date="2004-12" db="EMBL/GenBank/DDBJ databases">
        <title>Zebrafish NBS1 complements human Nijmegen breakage syndrome phenotype.</title>
        <authorList>
            <person name="Sampath S."/>
            <person name="Tang X."/>
            <person name="Manning J.P. Sr."/>
            <person name="Xu B."/>
        </authorList>
    </citation>
    <scope>NUCLEOTIDE SEQUENCE [MRNA]</scope>
</reference>
<reference key="2">
    <citation type="submission" date="2008-04" db="EMBL/GenBank/DDBJ databases">
        <authorList>
            <consortium name="NIH - Zebrafish Gene Collection (ZGC) project"/>
        </authorList>
    </citation>
    <scope>NUCLEOTIDE SEQUENCE [LARGE SCALE MRNA]</scope>
</reference>
<sequence>MWKLQPTESGGESVILLAGQEYVVGRKNCEILLTNDQSISRVHAVLTVTEQAVTLKDSSKYGTFVNGEKLESGSTKTLQTGYKITFGVFQSKFSLEKECIVVCSSCVDNEGKVTLSQDIRSVGGRLVSSWTSDCTHLVMPTVKVTIKTICALLCCRPIVKPAFFSALSKAVQQKLPLPKAERFRPQIDEPSLARDDVDLSARPERKSLFKGKTFLFLSSKQMKRLSVAVSCGGGVSQLLDEGALPVSLLESSSTCVLDMISGNSQPVISPASKKWLDSVGQILHRKGLRFITESEVGLAAIHVSNQTYCNPCSSLQSESVKTNPVFASATLSQSTAVDETALAAPSQNITAYVVNTEISQDQSRMVTSGISAVGETPEKTNPTQKASTTNKPLSLGQEPSSTRIVQETVMSSESFSVVESEQKMKKGSVVSARGRVEGPVKQKAPSSGNTTLKHSPQKQTALTSFFQPSSKKRPRESSASSVQPEPKFFKKDIKDNEDDIQQSFSVNRSHKTSSEETSLGQACGTGQNSSSKKRKEPEQDTLLGAEEPTAADDLEMSLEELEFLMSDEMDEPPQTAANKKQRLESGLTSKINSEQLSNQQEVTESKGRKGEKNQQSSSSNIQSMQLDRAGPAVTNQDTQTQSKRSPPDLEAHSSANKGPSKNKTPELEEVKKEEVSFVVNSRPQNGISQTSEAVLKQEMQASTSNSGPKNDPDLPRKLLQVQFMSLTVNNSSRSRPGPLQTHNPNDKNVKRFRKKNVPGFDGLPKIIGGSDLVAHNRSKHSELEEWLRQAAEEEKLNEREETLGDDLFRYNPRPAKKR</sequence>
<organism>
    <name type="scientific">Danio rerio</name>
    <name type="common">Zebrafish</name>
    <name type="synonym">Brachydanio rerio</name>
    <dbReference type="NCBI Taxonomy" id="7955"/>
    <lineage>
        <taxon>Eukaryota</taxon>
        <taxon>Metazoa</taxon>
        <taxon>Chordata</taxon>
        <taxon>Craniata</taxon>
        <taxon>Vertebrata</taxon>
        <taxon>Euteleostomi</taxon>
        <taxon>Actinopterygii</taxon>
        <taxon>Neopterygii</taxon>
        <taxon>Teleostei</taxon>
        <taxon>Ostariophysi</taxon>
        <taxon>Cypriniformes</taxon>
        <taxon>Danionidae</taxon>
        <taxon>Danioninae</taxon>
        <taxon>Danio</taxon>
    </lineage>
</organism>
<dbReference type="EMBL" id="AY858826">
    <property type="protein sequence ID" value="AAW50708.1"/>
    <property type="molecule type" value="mRNA"/>
</dbReference>
<dbReference type="EMBL" id="BC162723">
    <property type="protein sequence ID" value="AAI62723.1"/>
    <property type="molecule type" value="mRNA"/>
</dbReference>
<dbReference type="RefSeq" id="NP_001014819.1">
    <property type="nucleotide sequence ID" value="NM_001014819.1"/>
</dbReference>
<dbReference type="FunCoup" id="Q5I2W8">
    <property type="interactions" value="490"/>
</dbReference>
<dbReference type="STRING" id="7955.ENSDARP00000058973"/>
<dbReference type="PaxDb" id="7955-ENSDARP00000121705"/>
<dbReference type="Ensembl" id="ENSDART00000058974">
    <property type="protein sequence ID" value="ENSDARP00000058973"/>
    <property type="gene ID" value="ENSDARG00000040303"/>
</dbReference>
<dbReference type="GeneID" id="544655"/>
<dbReference type="KEGG" id="dre:544655"/>
<dbReference type="AGR" id="ZFIN:ZDB-GENE-041008-35"/>
<dbReference type="CTD" id="4683"/>
<dbReference type="ZFIN" id="ZDB-GENE-041008-35">
    <property type="gene designation" value="nbn"/>
</dbReference>
<dbReference type="eggNOG" id="ENOG502QQ7Y">
    <property type="taxonomic scope" value="Eukaryota"/>
</dbReference>
<dbReference type="HOGENOM" id="CLU_023410_0_0_1"/>
<dbReference type="InParanoid" id="Q5I2W8"/>
<dbReference type="OrthoDB" id="552194at2759"/>
<dbReference type="PhylomeDB" id="Q5I2W8"/>
<dbReference type="TreeFam" id="TF101103"/>
<dbReference type="Reactome" id="R-DRE-5693548">
    <property type="pathway name" value="Sensing of DNA Double Strand Breaks"/>
</dbReference>
<dbReference type="PRO" id="PR:Q5I2W8"/>
<dbReference type="Proteomes" id="UP000000437">
    <property type="component" value="Chromosome 16"/>
</dbReference>
<dbReference type="Bgee" id="ENSDARG00000040303">
    <property type="expression patterns" value="Expressed in early embryo and 25 other cell types or tissues"/>
</dbReference>
<dbReference type="ExpressionAtlas" id="Q5I2W8">
    <property type="expression patterns" value="baseline"/>
</dbReference>
<dbReference type="GO" id="GO:0000781">
    <property type="term" value="C:chromosome, telomeric region"/>
    <property type="evidence" value="ECO:0000250"/>
    <property type="project" value="UniProtKB"/>
</dbReference>
<dbReference type="GO" id="GO:0030870">
    <property type="term" value="C:Mre11 complex"/>
    <property type="evidence" value="ECO:0000318"/>
    <property type="project" value="GO_Central"/>
</dbReference>
<dbReference type="GO" id="GO:0016605">
    <property type="term" value="C:PML body"/>
    <property type="evidence" value="ECO:0007669"/>
    <property type="project" value="UniProtKB-SubCell"/>
</dbReference>
<dbReference type="GO" id="GO:0035861">
    <property type="term" value="C:site of double-strand break"/>
    <property type="evidence" value="ECO:0000250"/>
    <property type="project" value="UniProtKB"/>
</dbReference>
<dbReference type="GO" id="GO:0140463">
    <property type="term" value="F:chromatin-protein adaptor activity"/>
    <property type="evidence" value="ECO:0000250"/>
    <property type="project" value="UniProtKB"/>
</dbReference>
<dbReference type="GO" id="GO:0003684">
    <property type="term" value="F:damaged DNA binding"/>
    <property type="evidence" value="ECO:0000318"/>
    <property type="project" value="GO_Central"/>
</dbReference>
<dbReference type="GO" id="GO:0140031">
    <property type="term" value="F:phosphorylation-dependent protein binding"/>
    <property type="evidence" value="ECO:0000250"/>
    <property type="project" value="UniProtKB"/>
</dbReference>
<dbReference type="GO" id="GO:0043539">
    <property type="term" value="F:protein serine/threonine kinase activator activity"/>
    <property type="evidence" value="ECO:0000250"/>
    <property type="project" value="UniProtKB"/>
</dbReference>
<dbReference type="GO" id="GO:0000729">
    <property type="term" value="P:DNA double-strand break processing"/>
    <property type="evidence" value="ECO:0000250"/>
    <property type="project" value="UniProtKB"/>
</dbReference>
<dbReference type="GO" id="GO:0000724">
    <property type="term" value="P:double-strand break repair via homologous recombination"/>
    <property type="evidence" value="ECO:0000318"/>
    <property type="project" value="GO_Central"/>
</dbReference>
<dbReference type="GO" id="GO:0051321">
    <property type="term" value="P:meiotic cell cycle"/>
    <property type="evidence" value="ECO:0007669"/>
    <property type="project" value="UniProtKB-KW"/>
</dbReference>
<dbReference type="GO" id="GO:0007095">
    <property type="term" value="P:mitotic G2 DNA damage checkpoint signaling"/>
    <property type="evidence" value="ECO:0000318"/>
    <property type="project" value="GO_Central"/>
</dbReference>
<dbReference type="GO" id="GO:0031848">
    <property type="term" value="P:protection from non-homologous end joining at telomere"/>
    <property type="evidence" value="ECO:0000250"/>
    <property type="project" value="UniProtKB"/>
</dbReference>
<dbReference type="GO" id="GO:1990166">
    <property type="term" value="P:protein localization to site of double-strand break"/>
    <property type="evidence" value="ECO:0000250"/>
    <property type="project" value="UniProtKB"/>
</dbReference>
<dbReference type="GO" id="GO:0062176">
    <property type="term" value="P:R-loop processing"/>
    <property type="evidence" value="ECO:0000250"/>
    <property type="project" value="UniProtKB"/>
</dbReference>
<dbReference type="GO" id="GO:0043247">
    <property type="term" value="P:telomere maintenance in response to DNA damage"/>
    <property type="evidence" value="ECO:0000250"/>
    <property type="project" value="UniProtKB"/>
</dbReference>
<dbReference type="CDD" id="cd17741">
    <property type="entry name" value="BRCT_nibrin"/>
    <property type="match status" value="1"/>
</dbReference>
<dbReference type="CDD" id="cd22667">
    <property type="entry name" value="FHA_NBN"/>
    <property type="match status" value="1"/>
</dbReference>
<dbReference type="FunFam" id="2.60.200.20:FF:000017">
    <property type="entry name" value="Nibrin"/>
    <property type="match status" value="1"/>
</dbReference>
<dbReference type="FunFam" id="3.40.50.10980:FF:000001">
    <property type="entry name" value="Nibrin"/>
    <property type="match status" value="1"/>
</dbReference>
<dbReference type="Gene3D" id="2.60.200.20">
    <property type="match status" value="1"/>
</dbReference>
<dbReference type="Gene3D" id="3.40.50.10190">
    <property type="entry name" value="BRCT domain"/>
    <property type="match status" value="1"/>
</dbReference>
<dbReference type="Gene3D" id="3.40.50.10980">
    <property type="entry name" value="Nibrin, BRCT2 domain"/>
    <property type="match status" value="1"/>
</dbReference>
<dbReference type="InterPro" id="IPR001357">
    <property type="entry name" value="BRCT_dom"/>
</dbReference>
<dbReference type="InterPro" id="IPR036420">
    <property type="entry name" value="BRCT_dom_sf"/>
</dbReference>
<dbReference type="InterPro" id="IPR000253">
    <property type="entry name" value="FHA_dom"/>
</dbReference>
<dbReference type="InterPro" id="IPR040227">
    <property type="entry name" value="Nibrin-rel"/>
</dbReference>
<dbReference type="InterPro" id="IPR032429">
    <property type="entry name" value="Nibrin_BRCT2"/>
</dbReference>
<dbReference type="InterPro" id="IPR043014">
    <property type="entry name" value="Nibrin_BRCT2_sf"/>
</dbReference>
<dbReference type="InterPro" id="IPR013908">
    <property type="entry name" value="Nibrin_C"/>
</dbReference>
<dbReference type="InterPro" id="IPR016592">
    <property type="entry name" value="Nibrin_met"/>
</dbReference>
<dbReference type="InterPro" id="IPR008984">
    <property type="entry name" value="SMAD_FHA_dom_sf"/>
</dbReference>
<dbReference type="PANTHER" id="PTHR12162:SF0">
    <property type="entry name" value="NIBRIN"/>
    <property type="match status" value="1"/>
</dbReference>
<dbReference type="PANTHER" id="PTHR12162">
    <property type="entry name" value="NIBRIN-RELATED"/>
    <property type="match status" value="1"/>
</dbReference>
<dbReference type="Pfam" id="PF00533">
    <property type="entry name" value="BRCT"/>
    <property type="match status" value="1"/>
</dbReference>
<dbReference type="Pfam" id="PF00498">
    <property type="entry name" value="FHA"/>
    <property type="match status" value="1"/>
</dbReference>
<dbReference type="Pfam" id="PF08599">
    <property type="entry name" value="Nbs1_C"/>
    <property type="match status" value="1"/>
</dbReference>
<dbReference type="Pfam" id="PF16508">
    <property type="entry name" value="NIBRIN_BRCT_II"/>
    <property type="match status" value="1"/>
</dbReference>
<dbReference type="PIRSF" id="PIRSF011869">
    <property type="entry name" value="Nibrin_animal"/>
    <property type="match status" value="1"/>
</dbReference>
<dbReference type="SMART" id="SM00240">
    <property type="entry name" value="FHA"/>
    <property type="match status" value="1"/>
</dbReference>
<dbReference type="SMART" id="SM01348">
    <property type="entry name" value="Nbs1_C"/>
    <property type="match status" value="1"/>
</dbReference>
<dbReference type="SUPFAM" id="SSF52113">
    <property type="entry name" value="BRCT domain"/>
    <property type="match status" value="1"/>
</dbReference>
<dbReference type="SUPFAM" id="SSF49879">
    <property type="entry name" value="SMAD/FHA domain"/>
    <property type="match status" value="1"/>
</dbReference>
<dbReference type="PROSITE" id="PS50006">
    <property type="entry name" value="FHA_DOMAIN"/>
    <property type="match status" value="1"/>
</dbReference>
<name>NBN_DANRE</name>
<feature type="chain" id="PRO_0000231672" description="Nibrin">
    <location>
        <begin position="1"/>
        <end position="818"/>
    </location>
</feature>
<feature type="domain" description="FHA" evidence="4">
    <location>
        <begin position="22"/>
        <end position="70"/>
    </location>
</feature>
<feature type="domain" description="BRCT 1" evidence="3">
    <location>
        <begin position="91"/>
        <end position="168"/>
    </location>
</feature>
<feature type="domain" description="BRCT 2" evidence="1">
    <location>
        <begin position="211"/>
        <end position="301"/>
    </location>
</feature>
<feature type="region of interest" description="Disordered" evidence="5">
    <location>
        <begin position="372"/>
        <end position="716"/>
    </location>
</feature>
<feature type="region of interest" description="Disordered" evidence="5">
    <location>
        <begin position="729"/>
        <end position="757"/>
    </location>
</feature>
<feature type="region of interest" description="Disordered" evidence="5">
    <location>
        <begin position="793"/>
        <end position="818"/>
    </location>
</feature>
<feature type="short sequence motif" description="Nuclear localization signal" evidence="1">
    <location>
        <begin position="470"/>
        <end position="475"/>
    </location>
</feature>
<feature type="short sequence motif" description="FxF/Y motif" evidence="1">
    <location>
        <begin position="804"/>
        <end position="813"/>
    </location>
</feature>
<feature type="compositionally biased region" description="Polar residues" evidence="5">
    <location>
        <begin position="379"/>
        <end position="405"/>
    </location>
</feature>
<feature type="compositionally biased region" description="Low complexity" evidence="5">
    <location>
        <begin position="409"/>
        <end position="419"/>
    </location>
</feature>
<feature type="compositionally biased region" description="Polar residues" evidence="5">
    <location>
        <begin position="444"/>
        <end position="469"/>
    </location>
</feature>
<feature type="compositionally biased region" description="Polar residues" evidence="5">
    <location>
        <begin position="515"/>
        <end position="530"/>
    </location>
</feature>
<feature type="compositionally biased region" description="Acidic residues" evidence="5">
    <location>
        <begin position="549"/>
        <end position="571"/>
    </location>
</feature>
<feature type="compositionally biased region" description="Polar residues" evidence="5">
    <location>
        <begin position="586"/>
        <end position="602"/>
    </location>
</feature>
<feature type="compositionally biased region" description="Basic and acidic residues" evidence="5">
    <location>
        <begin position="603"/>
        <end position="612"/>
    </location>
</feature>
<feature type="compositionally biased region" description="Low complexity" evidence="5">
    <location>
        <begin position="613"/>
        <end position="625"/>
    </location>
</feature>
<feature type="compositionally biased region" description="Polar residues" evidence="5">
    <location>
        <begin position="633"/>
        <end position="644"/>
    </location>
</feature>
<feature type="compositionally biased region" description="Polar residues" evidence="5">
    <location>
        <begin position="653"/>
        <end position="662"/>
    </location>
</feature>
<feature type="compositionally biased region" description="Basic and acidic residues" evidence="5">
    <location>
        <begin position="663"/>
        <end position="675"/>
    </location>
</feature>
<feature type="compositionally biased region" description="Polar residues" evidence="5">
    <location>
        <begin position="678"/>
        <end position="692"/>
    </location>
</feature>
<feature type="compositionally biased region" description="Polar residues" evidence="5">
    <location>
        <begin position="699"/>
        <end position="708"/>
    </location>
</feature>
<feature type="compositionally biased region" description="Basic and acidic residues" evidence="5">
    <location>
        <begin position="793"/>
        <end position="808"/>
    </location>
</feature>
<feature type="sequence conflict" description="In Ref. 1; AAW50708." evidence="6" ref="1">
    <original>L</original>
    <variation>F</variation>
    <location>
        <position position="167"/>
    </location>
</feature>
<feature type="sequence conflict" description="In Ref. 1; AAW50708." evidence="6" ref="1">
    <original>D</original>
    <variation>E</variation>
    <location>
        <position position="196"/>
    </location>
</feature>
<feature type="sequence conflict" description="In Ref. 1; AAW50708." evidence="6" ref="1">
    <original>S</original>
    <variation>G</variation>
    <location>
        <position position="200"/>
    </location>
</feature>
<feature type="sequence conflict" description="In Ref. 1; AAW50708." evidence="6" ref="1">
    <original>F</original>
    <variation>S</variation>
    <location>
        <position position="504"/>
    </location>
</feature>
<feature type="sequence conflict" description="In Ref. 1; AAW50708." evidence="6" ref="1">
    <original>S</original>
    <variation>T</variation>
    <location>
        <position position="660"/>
    </location>
</feature>
<feature type="sequence conflict" description="In Ref. 1; AAW50708." evidence="6" ref="1">
    <original>Q</original>
    <variation>R</variation>
    <location>
        <position position="700"/>
    </location>
</feature>
<feature type="sequence conflict" description="In Ref. 1; AAW50708." evidence="6" ref="1">
    <original>T</original>
    <variation>Y</variation>
    <location>
        <position position="802"/>
    </location>
</feature>